<accession>Q86H98</accession>
<accession>Q553K9</accession>
<sequence>MKLFGKPKPKQDTQETIGKLRLTLDMLEKRQTFLQDKLEKEQEKAKVLVSQKRKREALLCLKKRNNFQNEVTKLQGSYDTLNQQIFALENAKMNMEIMNSMRDGARSLRELHGHLTIDKVDDVIEEIQEQMEIHEEISNAISQPLGNQVEDEEELLRELAEYEQEELDAQLLNIKAPSRELPQEIQVNFPTISKTVPKLSKEEEEIRALEESLAM</sequence>
<organism>
    <name type="scientific">Dictyostelium discoideum</name>
    <name type="common">Social amoeba</name>
    <dbReference type="NCBI Taxonomy" id="44689"/>
    <lineage>
        <taxon>Eukaryota</taxon>
        <taxon>Amoebozoa</taxon>
        <taxon>Evosea</taxon>
        <taxon>Eumycetozoa</taxon>
        <taxon>Dictyostelia</taxon>
        <taxon>Dictyosteliales</taxon>
        <taxon>Dictyosteliaceae</taxon>
        <taxon>Dictyostelium</taxon>
    </lineage>
</organism>
<reference key="1">
    <citation type="journal article" date="2002" name="Nature">
        <title>Sequence and analysis of chromosome 2 of Dictyostelium discoideum.</title>
        <authorList>
            <person name="Gloeckner G."/>
            <person name="Eichinger L."/>
            <person name="Szafranski K."/>
            <person name="Pachebat J.A."/>
            <person name="Bankier A.T."/>
            <person name="Dear P.H."/>
            <person name="Lehmann R."/>
            <person name="Baumgart C."/>
            <person name="Parra G."/>
            <person name="Abril J.F."/>
            <person name="Guigo R."/>
            <person name="Kumpf K."/>
            <person name="Tunggal B."/>
            <person name="Cox E.C."/>
            <person name="Quail M.A."/>
            <person name="Platzer M."/>
            <person name="Rosenthal A."/>
            <person name="Noegel A.A."/>
        </authorList>
    </citation>
    <scope>NUCLEOTIDE SEQUENCE [LARGE SCALE GENOMIC DNA]</scope>
    <source>
        <strain>AX4</strain>
    </source>
</reference>
<reference key="2">
    <citation type="journal article" date="2005" name="Nature">
        <title>The genome of the social amoeba Dictyostelium discoideum.</title>
        <authorList>
            <person name="Eichinger L."/>
            <person name="Pachebat J.A."/>
            <person name="Gloeckner G."/>
            <person name="Rajandream M.A."/>
            <person name="Sucgang R."/>
            <person name="Berriman M."/>
            <person name="Song J."/>
            <person name="Olsen R."/>
            <person name="Szafranski K."/>
            <person name="Xu Q."/>
            <person name="Tunggal B."/>
            <person name="Kummerfeld S."/>
            <person name="Madera M."/>
            <person name="Konfortov B.A."/>
            <person name="Rivero F."/>
            <person name="Bankier A.T."/>
            <person name="Lehmann R."/>
            <person name="Hamlin N."/>
            <person name="Davies R."/>
            <person name="Gaudet P."/>
            <person name="Fey P."/>
            <person name="Pilcher K."/>
            <person name="Chen G."/>
            <person name="Saunders D."/>
            <person name="Sodergren E.J."/>
            <person name="Davis P."/>
            <person name="Kerhornou A."/>
            <person name="Nie X."/>
            <person name="Hall N."/>
            <person name="Anjard C."/>
            <person name="Hemphill L."/>
            <person name="Bason N."/>
            <person name="Farbrother P."/>
            <person name="Desany B."/>
            <person name="Just E."/>
            <person name="Morio T."/>
            <person name="Rost R."/>
            <person name="Churcher C.M."/>
            <person name="Cooper J."/>
            <person name="Haydock S."/>
            <person name="van Driessche N."/>
            <person name="Cronin A."/>
            <person name="Goodhead I."/>
            <person name="Muzny D.M."/>
            <person name="Mourier T."/>
            <person name="Pain A."/>
            <person name="Lu M."/>
            <person name="Harper D."/>
            <person name="Lindsay R."/>
            <person name="Hauser H."/>
            <person name="James K.D."/>
            <person name="Quiles M."/>
            <person name="Madan Babu M."/>
            <person name="Saito T."/>
            <person name="Buchrieser C."/>
            <person name="Wardroper A."/>
            <person name="Felder M."/>
            <person name="Thangavelu M."/>
            <person name="Johnson D."/>
            <person name="Knights A."/>
            <person name="Loulseged H."/>
            <person name="Mungall K.L."/>
            <person name="Oliver K."/>
            <person name="Price C."/>
            <person name="Quail M.A."/>
            <person name="Urushihara H."/>
            <person name="Hernandez J."/>
            <person name="Rabbinowitsch E."/>
            <person name="Steffen D."/>
            <person name="Sanders M."/>
            <person name="Ma J."/>
            <person name="Kohara Y."/>
            <person name="Sharp S."/>
            <person name="Simmonds M.N."/>
            <person name="Spiegler S."/>
            <person name="Tivey A."/>
            <person name="Sugano S."/>
            <person name="White B."/>
            <person name="Walker D."/>
            <person name="Woodward J.R."/>
            <person name="Winckler T."/>
            <person name="Tanaka Y."/>
            <person name="Shaulsky G."/>
            <person name="Schleicher M."/>
            <person name="Weinstock G.M."/>
            <person name="Rosenthal A."/>
            <person name="Cox E.C."/>
            <person name="Chisholm R.L."/>
            <person name="Gibbs R.A."/>
            <person name="Loomis W.F."/>
            <person name="Platzer M."/>
            <person name="Kay R.R."/>
            <person name="Williams J.G."/>
            <person name="Dear P.H."/>
            <person name="Noegel A.A."/>
            <person name="Barrell B.G."/>
            <person name="Kuspa A."/>
        </authorList>
    </citation>
    <scope>NUCLEOTIDE SEQUENCE [LARGE SCALE GENOMIC DNA]</scope>
    <source>
        <strain>AX4</strain>
    </source>
</reference>
<reference key="3">
    <citation type="journal article" date="2005" name="Dev. Biol.">
        <title>Dd-Alix, a conserved endosome-associated protein, controls Dictyostelium development.</title>
        <authorList>
            <person name="Mattei S."/>
            <person name="Ryves W.J."/>
            <person name="Blot B."/>
            <person name="Sadoul R."/>
            <person name="Harwood A.J."/>
            <person name="Satre M."/>
            <person name="Klein G."/>
            <person name="Aubry L."/>
        </authorList>
    </citation>
    <scope>FUNCTION</scope>
    <scope>SUBCELLULAR LOCATION</scope>
</reference>
<dbReference type="EMBL" id="AAFI02000013">
    <property type="protein sequence ID" value="EAL69537.1"/>
    <property type="molecule type" value="Genomic_DNA"/>
</dbReference>
<dbReference type="RefSeq" id="XP_643404.1">
    <property type="nucleotide sequence ID" value="XM_638312.1"/>
</dbReference>
<dbReference type="SMR" id="Q86H98"/>
<dbReference type="FunCoup" id="Q86H98">
    <property type="interactions" value="778"/>
</dbReference>
<dbReference type="STRING" id="44689.Q86H98"/>
<dbReference type="PaxDb" id="44689-DDB0231531"/>
<dbReference type="EnsemblProtists" id="EAL69537">
    <property type="protein sequence ID" value="EAL69537"/>
    <property type="gene ID" value="DDB_G0275573"/>
</dbReference>
<dbReference type="GeneID" id="8619990"/>
<dbReference type="KEGG" id="ddi:DDB_G0275573"/>
<dbReference type="dictyBase" id="DDB_G0275573">
    <property type="gene designation" value="vps32"/>
</dbReference>
<dbReference type="VEuPathDB" id="AmoebaDB:DDB_G0275573"/>
<dbReference type="eggNOG" id="KOG1656">
    <property type="taxonomic scope" value="Eukaryota"/>
</dbReference>
<dbReference type="HOGENOM" id="CLU_071097_1_1_1"/>
<dbReference type="InParanoid" id="Q86H98"/>
<dbReference type="OMA" id="MKQIHGG"/>
<dbReference type="PhylomeDB" id="Q86H98"/>
<dbReference type="Reactome" id="R-DDI-1632852">
    <property type="pathway name" value="Macroautophagy"/>
</dbReference>
<dbReference type="Reactome" id="R-DDI-917729">
    <property type="pathway name" value="Endosomal Sorting Complex Required For Transport (ESCRT)"/>
</dbReference>
<dbReference type="Reactome" id="R-DDI-9668328">
    <property type="pathway name" value="Sealing of the nuclear envelope (NE) by ESCRT-III"/>
</dbReference>
<dbReference type="PRO" id="PR:Q86H98"/>
<dbReference type="Proteomes" id="UP000002195">
    <property type="component" value="Chromosome 2"/>
</dbReference>
<dbReference type="GO" id="GO:0009898">
    <property type="term" value="C:cytoplasmic side of plasma membrane"/>
    <property type="evidence" value="ECO:0000318"/>
    <property type="project" value="GO_Central"/>
</dbReference>
<dbReference type="GO" id="GO:0005768">
    <property type="term" value="C:endosome"/>
    <property type="evidence" value="ECO:0000314"/>
    <property type="project" value="dictyBase"/>
</dbReference>
<dbReference type="GO" id="GO:0000815">
    <property type="term" value="C:ESCRT III complex"/>
    <property type="evidence" value="ECO:0000250"/>
    <property type="project" value="dictyBase"/>
</dbReference>
<dbReference type="GO" id="GO:0031902">
    <property type="term" value="C:late endosome membrane"/>
    <property type="evidence" value="ECO:0007669"/>
    <property type="project" value="UniProtKB-SubCell"/>
</dbReference>
<dbReference type="GO" id="GO:0005771">
    <property type="term" value="C:multivesicular body"/>
    <property type="evidence" value="ECO:0000318"/>
    <property type="project" value="GO_Central"/>
</dbReference>
<dbReference type="GO" id="GO:0005634">
    <property type="term" value="C:nucleus"/>
    <property type="evidence" value="ECO:0000314"/>
    <property type="project" value="UniProtKB"/>
</dbReference>
<dbReference type="GO" id="GO:0140220">
    <property type="term" value="C:pathogen-containing vacuole"/>
    <property type="evidence" value="ECO:0000314"/>
    <property type="project" value="dictyBase"/>
</dbReference>
<dbReference type="GO" id="GO:0032010">
    <property type="term" value="C:phagolysosome"/>
    <property type="evidence" value="ECO:0000314"/>
    <property type="project" value="dictyBase"/>
</dbReference>
<dbReference type="GO" id="GO:0005886">
    <property type="term" value="C:plasma membrane"/>
    <property type="evidence" value="ECO:0000314"/>
    <property type="project" value="dictyBase"/>
</dbReference>
<dbReference type="GO" id="GO:0008333">
    <property type="term" value="P:endosome to lysosome transport"/>
    <property type="evidence" value="ECO:0000315"/>
    <property type="project" value="UniProtKB"/>
</dbReference>
<dbReference type="GO" id="GO:0045324">
    <property type="term" value="P:late endosome to vacuole transport"/>
    <property type="evidence" value="ECO:0000250"/>
    <property type="project" value="dictyBase"/>
</dbReference>
<dbReference type="GO" id="GO:0032511">
    <property type="term" value="P:late endosome to vacuole transport via multivesicular body sorting pathway"/>
    <property type="evidence" value="ECO:0000318"/>
    <property type="project" value="GO_Central"/>
</dbReference>
<dbReference type="GO" id="GO:0007040">
    <property type="term" value="P:lysosome organization"/>
    <property type="evidence" value="ECO:0000315"/>
    <property type="project" value="UniProtKB"/>
</dbReference>
<dbReference type="GO" id="GO:0015031">
    <property type="term" value="P:protein transport"/>
    <property type="evidence" value="ECO:0007669"/>
    <property type="project" value="UniProtKB-KW"/>
</dbReference>
<dbReference type="GO" id="GO:0001919">
    <property type="term" value="P:regulation of receptor recycling"/>
    <property type="evidence" value="ECO:0000315"/>
    <property type="project" value="UniProtKB"/>
</dbReference>
<dbReference type="GO" id="GO:0006900">
    <property type="term" value="P:vesicle budding from membrane"/>
    <property type="evidence" value="ECO:0000318"/>
    <property type="project" value="GO_Central"/>
</dbReference>
<dbReference type="FunFam" id="1.10.287.1060:FF:000007">
    <property type="entry name" value="Charged multivesicular body protein 7"/>
    <property type="match status" value="1"/>
</dbReference>
<dbReference type="Gene3D" id="1.10.287.1060">
    <property type="entry name" value="ESAT-6-like"/>
    <property type="match status" value="1"/>
</dbReference>
<dbReference type="InterPro" id="IPR005024">
    <property type="entry name" value="Snf7_fam"/>
</dbReference>
<dbReference type="PANTHER" id="PTHR22761">
    <property type="entry name" value="CHARGED MULTIVESICULAR BODY PROTEIN"/>
    <property type="match status" value="1"/>
</dbReference>
<dbReference type="PANTHER" id="PTHR22761:SF10">
    <property type="entry name" value="GH13992P"/>
    <property type="match status" value="1"/>
</dbReference>
<dbReference type="Pfam" id="PF03357">
    <property type="entry name" value="Snf7"/>
    <property type="match status" value="1"/>
</dbReference>
<proteinExistence type="inferred from homology"/>
<protein>
    <recommendedName>
        <fullName>Charged multivesicular body protein 4</fullName>
    </recommendedName>
    <alternativeName>
        <fullName>Vacuolar protein-sorting-associated protein 32</fullName>
        <shortName>Dd-Vps32</shortName>
    </alternativeName>
</protein>
<gene>
    <name type="primary">chmp4</name>
    <name type="synonym">snf7</name>
    <name type="synonym">vps32</name>
    <name type="ORF">DDB_G0275573</name>
</gene>
<keyword id="KW-0175">Coiled coil</keyword>
<keyword id="KW-0968">Cytoplasmic vesicle</keyword>
<keyword id="KW-0967">Endosome</keyword>
<keyword id="KW-0472">Membrane</keyword>
<keyword id="KW-0653">Protein transport</keyword>
<keyword id="KW-1185">Reference proteome</keyword>
<keyword id="KW-0813">Transport</keyword>
<name>CHMP4_DICDI</name>
<comment type="function">
    <text evidence="3">Probable core component of the endosomal sorting required for transport complex III (ESCRT-III) which is involved in multivesicular bodies (MVBs) formation and sorting of endosomal cargo proteins into MVBs. MVBs contain intraluminal vesicles (ILVs) that are generated by invagination and scission from the limiting membrane of the endosome and mostly are delivered to lysosomes enabling degradation of membrane proteins.</text>
</comment>
<comment type="subunit">
    <text evidence="1">Probable core component of the endosomal sorting required for transport complex III (ESCRT-III). ESCRT-III components are thought to multimerize to form a flat lattice on the perimeter membrane of the endosome (By similarity).</text>
</comment>
<comment type="subcellular location">
    <subcellularLocation>
        <location evidence="3">Cytoplasmic vesicle membrane</location>
    </subcellularLocation>
    <subcellularLocation>
        <location evidence="1">Late endosome membrane</location>
        <topology evidence="1">Peripheral membrane protein</topology>
    </subcellularLocation>
    <text>Membrane-associated. Colocalizes to large vesicle-like structures with PDCD6IP/Alix.</text>
</comment>
<comment type="similarity">
    <text evidence="4">Belongs to the SNF7 family.</text>
</comment>
<feature type="chain" id="PRO_0000328395" description="Charged multivesicular body protein 4">
    <location>
        <begin position="1"/>
        <end position="215"/>
    </location>
</feature>
<feature type="coiled-coil region" evidence="2">
    <location>
        <begin position="10"/>
        <end position="173"/>
    </location>
</feature>
<evidence type="ECO:0000250" key="1"/>
<evidence type="ECO:0000255" key="2"/>
<evidence type="ECO:0000269" key="3">
    <source>
    </source>
</evidence>
<evidence type="ECO:0000305" key="4"/>